<gene>
    <name evidence="2" type="primary">SELENOW</name>
</gene>
<organism>
    <name type="scientific">Ovis aries</name>
    <name type="common">Sheep</name>
    <dbReference type="NCBI Taxonomy" id="9940"/>
    <lineage>
        <taxon>Eukaryota</taxon>
        <taxon>Metazoa</taxon>
        <taxon>Chordata</taxon>
        <taxon>Craniata</taxon>
        <taxon>Vertebrata</taxon>
        <taxon>Euteleostomi</taxon>
        <taxon>Mammalia</taxon>
        <taxon>Eutheria</taxon>
        <taxon>Laurasiatheria</taxon>
        <taxon>Artiodactyla</taxon>
        <taxon>Ruminantia</taxon>
        <taxon>Pecora</taxon>
        <taxon>Bovidae</taxon>
        <taxon>Caprinae</taxon>
        <taxon>Ovis</taxon>
    </lineage>
</organism>
<evidence type="ECO:0000250" key="1"/>
<evidence type="ECO:0000250" key="2">
    <source>
        <dbReference type="UniProtKB" id="P63302"/>
    </source>
</evidence>
<evidence type="ECO:0000269" key="3">
    <source>
    </source>
</evidence>
<evidence type="ECO:0000269" key="4">
    <source>
    </source>
</evidence>
<evidence type="ECO:0000303" key="5">
    <source>
    </source>
</evidence>
<evidence type="ECO:0000305" key="6"/>
<dbReference type="EMBL" id="U67853">
    <property type="protein sequence ID" value="AAC48757.1"/>
    <property type="molecule type" value="Genomic_DNA"/>
</dbReference>
<dbReference type="RefSeq" id="XP_027834347.1">
    <property type="nucleotide sequence ID" value="XM_027978546.2"/>
</dbReference>
<dbReference type="STRING" id="9940.ENSOARP00000012280"/>
<dbReference type="PaxDb" id="9940-ENSOARP00000012280"/>
<dbReference type="Ensembl" id="ENSOART00180031561">
    <property type="protein sequence ID" value="ENSOARP00180016124"/>
    <property type="gene ID" value="ENSOARG00180019213"/>
</dbReference>
<dbReference type="Ensembl" id="ENSOART00215096509">
    <property type="protein sequence ID" value="ENSOARP00215052089"/>
    <property type="gene ID" value="ENSOARG00215057548"/>
</dbReference>
<dbReference type="Ensembl" id="ENSOART00220079747">
    <property type="protein sequence ID" value="ENSOARP00220042778"/>
    <property type="gene ID" value="ENSOARG00220048013"/>
</dbReference>
<dbReference type="Ensembl" id="ENSOART00225060650">
    <property type="protein sequence ID" value="ENSOARP00225030472"/>
    <property type="gene ID" value="ENSOARG00225036658"/>
</dbReference>
<dbReference type="GeneID" id="101119329"/>
<dbReference type="eggNOG" id="ENOG502S9W8">
    <property type="taxonomic scope" value="Eukaryota"/>
</dbReference>
<dbReference type="Proteomes" id="UP000002356">
    <property type="component" value="Unplaced"/>
</dbReference>
<dbReference type="GO" id="GO:0005829">
    <property type="term" value="C:cytosol"/>
    <property type="evidence" value="ECO:0007669"/>
    <property type="project" value="TreeGrafter"/>
</dbReference>
<dbReference type="GO" id="GO:0016209">
    <property type="term" value="F:antioxidant activity"/>
    <property type="evidence" value="ECO:0007669"/>
    <property type="project" value="UniProtKB-KW"/>
</dbReference>
<dbReference type="GO" id="GO:0030218">
    <property type="term" value="P:erythrocyte differentiation"/>
    <property type="evidence" value="ECO:0007669"/>
    <property type="project" value="Ensembl"/>
</dbReference>
<dbReference type="GO" id="GO:0032496">
    <property type="term" value="P:response to lipopolysaccharide"/>
    <property type="evidence" value="ECO:0007669"/>
    <property type="project" value="Ensembl"/>
</dbReference>
<dbReference type="GO" id="GO:0006950">
    <property type="term" value="P:response to stress"/>
    <property type="evidence" value="ECO:0007669"/>
    <property type="project" value="Ensembl"/>
</dbReference>
<dbReference type="FunFam" id="3.40.30.10:FF:000158">
    <property type="entry name" value="Selenoprotein W"/>
    <property type="match status" value="1"/>
</dbReference>
<dbReference type="Gene3D" id="3.40.30.10">
    <property type="entry name" value="Glutaredoxin"/>
    <property type="match status" value="1"/>
</dbReference>
<dbReference type="InterPro" id="IPR011893">
    <property type="entry name" value="Selenoprotein_Rdx-typ"/>
</dbReference>
<dbReference type="InterPro" id="IPR051441">
    <property type="entry name" value="SelW_related"/>
</dbReference>
<dbReference type="InterPro" id="IPR036249">
    <property type="entry name" value="Thioredoxin-like_sf"/>
</dbReference>
<dbReference type="NCBIfam" id="TIGR02174">
    <property type="entry name" value="CXXU_selWTH"/>
    <property type="match status" value="1"/>
</dbReference>
<dbReference type="PANTHER" id="PTHR15124">
    <property type="entry name" value="SELENOPROTEIN W"/>
    <property type="match status" value="1"/>
</dbReference>
<dbReference type="PANTHER" id="PTHR15124:SF16">
    <property type="entry name" value="SELENOPROTEIN W"/>
    <property type="match status" value="1"/>
</dbReference>
<dbReference type="Pfam" id="PF10262">
    <property type="entry name" value="Rdx"/>
    <property type="match status" value="1"/>
</dbReference>
<dbReference type="SUPFAM" id="SSF52833">
    <property type="entry name" value="Thioredoxin-like"/>
    <property type="match status" value="1"/>
</dbReference>
<sequence length="87" mass="9475">MAVVVRVVYCGAUGYKPKYLQLKKKLEDEFPSRLDICGEGTPQVTGFFEVFVAGKLVHSKKGGDGYVDTESKFLKLVAAIKAALAQA</sequence>
<protein>
    <recommendedName>
        <fullName evidence="5">Selenoprotein W</fullName>
        <shortName evidence="2">SelW</shortName>
    </recommendedName>
</protein>
<proteinExistence type="evidence at protein level"/>
<comment type="function">
    <text evidence="1">Plays a role as a glutathione (GSH)-dependent antioxidant. May be involved in a redox-related process. May play a role in the myopathies of selenium deficiency (By similarity).</text>
</comment>
<comment type="subunit">
    <text evidence="1">Interacts with DPYSL2, PRDX1, YWHAB, YWHAG, HSP70 and HSP90.</text>
</comment>
<comment type="subcellular location">
    <subcellularLocation>
        <location evidence="1">Cytoplasm</location>
    </subcellularLocation>
</comment>
<comment type="tissue specificity">
    <text evidence="3 4">Detected in muscle, heart, tongue, brain, lung, spleen, kidney and liver. Highest levels expressed in muscle and heart whereas lowest levels detected in liver (at protein level).</text>
</comment>
<comment type="induction">
    <text evidence="4">Up-regulated by dietary selenium.</text>
</comment>
<comment type="similarity">
    <text evidence="6">Belongs to the SelWTH family. Selenoprotein W subfamily.</text>
</comment>
<feature type="chain" id="PRO_0000097683" description="Selenoprotein W">
    <location>
        <begin position="1"/>
        <end position="87"/>
    </location>
</feature>
<feature type="non-standard amino acid" description="Selenocysteine">
    <location>
        <position position="13"/>
    </location>
</feature>
<feature type="modified residue" description="S-glutathionyl cysteine" evidence="1">
    <location>
        <position position="37"/>
    </location>
</feature>
<feature type="cross-link" description="Cysteinyl-selenocysteine (Cys-Sec); redox-active" evidence="1">
    <location>
        <begin position="10"/>
        <end position="13"/>
    </location>
</feature>
<reference key="1">
    <citation type="journal article" date="1997" name="Gene">
        <title>Conserved features of selenocysteine insertion sequence (SECIS) elements in selenoprotein W cDNAs from five species.</title>
        <authorList>
            <person name="Gu Q.-P."/>
            <person name="Beilstein M.A."/>
            <person name="Vendeland S.C."/>
            <person name="Lugade A."/>
            <person name="Ream W."/>
            <person name="Whanger P.D."/>
        </authorList>
    </citation>
    <scope>NUCLEOTIDE SEQUENCE [GENOMIC DNA]</scope>
    <source>
        <tissue>Skeletal muscle</tissue>
    </source>
</reference>
<reference key="2">
    <citation type="journal article" date="1995" name="FASEB J.">
        <title>Tissue distribution and influence of selenium status on levels of selenoprotein W.</title>
        <authorList>
            <person name="Yeh J.-Y."/>
            <person name="Beilstein M.A."/>
            <person name="Andrews J.S."/>
            <person name="Whanger P.D."/>
        </authorList>
    </citation>
    <scope>TISSUE SPECIFICITY</scope>
</reference>
<reference key="3">
    <citation type="journal article" date="1997" name="J. Nutr.">
        <title>Selenium influences tissue levels of selenoprotein W in sheep.</title>
        <authorList>
            <person name="Yeh J.Y."/>
            <person name="Gu Q.P."/>
            <person name="Beilstein M.A."/>
            <person name="Forsberg N.E."/>
            <person name="Whanger P.D."/>
        </authorList>
    </citation>
    <scope>TISSUE SPECIFICITY</scope>
    <scope>INDUCTION</scope>
</reference>
<keyword id="KW-0049">Antioxidant</keyword>
<keyword id="KW-0963">Cytoplasm</keyword>
<keyword id="KW-0318">Glutathionylation</keyword>
<keyword id="KW-0676">Redox-active center</keyword>
<keyword id="KW-1185">Reference proteome</keyword>
<keyword id="KW-0712">Selenocysteine</keyword>
<accession>O19097</accession>
<name>SELW_SHEEP</name>